<feature type="chain" id="PRO_1000144911" description="Iron-sulfur cluster insertion protein ErpA">
    <location>
        <begin position="1"/>
        <end position="114"/>
    </location>
</feature>
<feature type="binding site" evidence="1">
    <location>
        <position position="42"/>
    </location>
    <ligand>
        <name>iron-sulfur cluster</name>
        <dbReference type="ChEBI" id="CHEBI:30408"/>
    </ligand>
</feature>
<feature type="binding site" evidence="1">
    <location>
        <position position="106"/>
    </location>
    <ligand>
        <name>iron-sulfur cluster</name>
        <dbReference type="ChEBI" id="CHEBI:30408"/>
    </ligand>
</feature>
<feature type="binding site" evidence="1">
    <location>
        <position position="108"/>
    </location>
    <ligand>
        <name>iron-sulfur cluster</name>
        <dbReference type="ChEBI" id="CHEBI:30408"/>
    </ligand>
</feature>
<accession>B1XD26</accession>
<gene>
    <name evidence="1" type="primary">erpA</name>
    <name type="ordered locus">ECDH10B_0136</name>
</gene>
<organism>
    <name type="scientific">Escherichia coli (strain K12 / DH10B)</name>
    <dbReference type="NCBI Taxonomy" id="316385"/>
    <lineage>
        <taxon>Bacteria</taxon>
        <taxon>Pseudomonadati</taxon>
        <taxon>Pseudomonadota</taxon>
        <taxon>Gammaproteobacteria</taxon>
        <taxon>Enterobacterales</taxon>
        <taxon>Enterobacteriaceae</taxon>
        <taxon>Escherichia</taxon>
    </lineage>
</organism>
<dbReference type="EMBL" id="CP000948">
    <property type="protein sequence ID" value="ACB01335.1"/>
    <property type="molecule type" value="Genomic_DNA"/>
</dbReference>
<dbReference type="RefSeq" id="WP_001295564.1">
    <property type="nucleotide sequence ID" value="NC_010473.1"/>
</dbReference>
<dbReference type="SMR" id="B1XD26"/>
<dbReference type="GeneID" id="93777270"/>
<dbReference type="KEGG" id="ecd:ECDH10B_0136"/>
<dbReference type="HOGENOM" id="CLU_069054_5_3_6"/>
<dbReference type="GO" id="GO:0005829">
    <property type="term" value="C:cytosol"/>
    <property type="evidence" value="ECO:0007669"/>
    <property type="project" value="TreeGrafter"/>
</dbReference>
<dbReference type="GO" id="GO:0051537">
    <property type="term" value="F:2 iron, 2 sulfur cluster binding"/>
    <property type="evidence" value="ECO:0007669"/>
    <property type="project" value="TreeGrafter"/>
</dbReference>
<dbReference type="GO" id="GO:0051539">
    <property type="term" value="F:4 iron, 4 sulfur cluster binding"/>
    <property type="evidence" value="ECO:0007669"/>
    <property type="project" value="TreeGrafter"/>
</dbReference>
<dbReference type="GO" id="GO:0005506">
    <property type="term" value="F:iron ion binding"/>
    <property type="evidence" value="ECO:0007669"/>
    <property type="project" value="UniProtKB-UniRule"/>
</dbReference>
<dbReference type="GO" id="GO:0016226">
    <property type="term" value="P:iron-sulfur cluster assembly"/>
    <property type="evidence" value="ECO:0007669"/>
    <property type="project" value="UniProtKB-UniRule"/>
</dbReference>
<dbReference type="FunFam" id="2.60.300.12:FF:000002">
    <property type="entry name" value="Iron-sulfur cluster insertion protein ErpA"/>
    <property type="match status" value="1"/>
</dbReference>
<dbReference type="Gene3D" id="2.60.300.12">
    <property type="entry name" value="HesB-like domain"/>
    <property type="match status" value="1"/>
</dbReference>
<dbReference type="HAMAP" id="MF_01380">
    <property type="entry name" value="Fe_S_insert_ErpA"/>
    <property type="match status" value="1"/>
</dbReference>
<dbReference type="InterPro" id="IPR000361">
    <property type="entry name" value="FeS_biogenesis"/>
</dbReference>
<dbReference type="InterPro" id="IPR016092">
    <property type="entry name" value="FeS_cluster_insertion"/>
</dbReference>
<dbReference type="InterPro" id="IPR017870">
    <property type="entry name" value="FeS_cluster_insertion_CS"/>
</dbReference>
<dbReference type="InterPro" id="IPR023063">
    <property type="entry name" value="FeS_cluster_insertion_RrpA"/>
</dbReference>
<dbReference type="InterPro" id="IPR035903">
    <property type="entry name" value="HesB-like_dom_sf"/>
</dbReference>
<dbReference type="NCBIfam" id="TIGR00049">
    <property type="entry name" value="iron-sulfur cluster assembly accessory protein"/>
    <property type="match status" value="1"/>
</dbReference>
<dbReference type="NCBIfam" id="NF010147">
    <property type="entry name" value="PRK13623.1"/>
    <property type="match status" value="1"/>
</dbReference>
<dbReference type="PANTHER" id="PTHR43011">
    <property type="entry name" value="IRON-SULFUR CLUSTER ASSEMBLY 2 HOMOLOG, MITOCHONDRIAL"/>
    <property type="match status" value="1"/>
</dbReference>
<dbReference type="PANTHER" id="PTHR43011:SF1">
    <property type="entry name" value="IRON-SULFUR CLUSTER ASSEMBLY 2 HOMOLOG, MITOCHONDRIAL"/>
    <property type="match status" value="1"/>
</dbReference>
<dbReference type="Pfam" id="PF01521">
    <property type="entry name" value="Fe-S_biosyn"/>
    <property type="match status" value="1"/>
</dbReference>
<dbReference type="SUPFAM" id="SSF89360">
    <property type="entry name" value="HesB-like domain"/>
    <property type="match status" value="1"/>
</dbReference>
<dbReference type="PROSITE" id="PS01152">
    <property type="entry name" value="HESB"/>
    <property type="match status" value="1"/>
</dbReference>
<keyword id="KW-0408">Iron</keyword>
<keyword id="KW-0411">Iron-sulfur</keyword>
<keyword id="KW-0479">Metal-binding</keyword>
<reference key="1">
    <citation type="journal article" date="2008" name="J. Bacteriol.">
        <title>The complete genome sequence of Escherichia coli DH10B: insights into the biology of a laboratory workhorse.</title>
        <authorList>
            <person name="Durfee T."/>
            <person name="Nelson R."/>
            <person name="Baldwin S."/>
            <person name="Plunkett G. III"/>
            <person name="Burland V."/>
            <person name="Mau B."/>
            <person name="Petrosino J.F."/>
            <person name="Qin X."/>
            <person name="Muzny D.M."/>
            <person name="Ayele M."/>
            <person name="Gibbs R.A."/>
            <person name="Csorgo B."/>
            <person name="Posfai G."/>
            <person name="Weinstock G.M."/>
            <person name="Blattner F.R."/>
        </authorList>
    </citation>
    <scope>NUCLEOTIDE SEQUENCE [LARGE SCALE GENOMIC DNA]</scope>
    <source>
        <strain>K12 / DH10B</strain>
    </source>
</reference>
<proteinExistence type="inferred from homology"/>
<name>ERPA_ECODH</name>
<comment type="function">
    <text evidence="1">Required for insertion of 4Fe-4S clusters for at least IspG.</text>
</comment>
<comment type="cofactor">
    <cofactor evidence="1">
        <name>iron-sulfur cluster</name>
        <dbReference type="ChEBI" id="CHEBI:30408"/>
    </cofactor>
    <text evidence="1">Binds 1 iron-sulfur cluster per subunit.</text>
</comment>
<comment type="subunit">
    <text evidence="1">Homodimer.</text>
</comment>
<comment type="similarity">
    <text evidence="1">Belongs to the HesB/IscA family.</text>
</comment>
<sequence length="114" mass="12100">MSDDVALPLEFTDAAANKVKSLIADEDNPNLKLRVYITGGGCSGFQYGFTFDDQVNEGDMTIEKQGVGLVVDPMSLQYLVGGSVDYTEGLEGSRFIVTNPNAKSTCGCGSSFSI</sequence>
<protein>
    <recommendedName>
        <fullName evidence="1">Iron-sulfur cluster insertion protein ErpA</fullName>
    </recommendedName>
</protein>
<evidence type="ECO:0000255" key="1">
    <source>
        <dbReference type="HAMAP-Rule" id="MF_01380"/>
    </source>
</evidence>